<proteinExistence type="inferred from homology"/>
<comment type="function">
    <text evidence="1">Located at the top of the head of the 30S subunit, it contacts several helices of the 16S rRNA. In the 70S ribosome it contacts the 23S rRNA (bridge B1a) and protein L5 of the 50S subunit (bridge B1b), connecting the 2 subunits; these bridges are implicated in subunit movement. Contacts the tRNAs in the A and P-sites.</text>
</comment>
<comment type="subunit">
    <text evidence="1">Part of the 30S ribosomal subunit. Forms a loose heterodimer with protein S19. Forms two bridges to the 50S subunit in the 70S ribosome.</text>
</comment>
<comment type="similarity">
    <text evidence="1">Belongs to the universal ribosomal protein uS13 family.</text>
</comment>
<evidence type="ECO:0000255" key="1">
    <source>
        <dbReference type="HAMAP-Rule" id="MF_01315"/>
    </source>
</evidence>
<evidence type="ECO:0000256" key="2">
    <source>
        <dbReference type="SAM" id="MobiDB-lite"/>
    </source>
</evidence>
<evidence type="ECO:0000305" key="3"/>
<accession>B4U524</accession>
<gene>
    <name evidence="1" type="primary">rpsM</name>
    <name type="ordered locus">Sez_0080</name>
</gene>
<feature type="chain" id="PRO_1000141312" description="Small ribosomal subunit protein uS13">
    <location>
        <begin position="1"/>
        <end position="121"/>
    </location>
</feature>
<feature type="region of interest" description="Disordered" evidence="2">
    <location>
        <begin position="95"/>
        <end position="121"/>
    </location>
</feature>
<feature type="compositionally biased region" description="Basic residues" evidence="2">
    <location>
        <begin position="106"/>
        <end position="121"/>
    </location>
</feature>
<organism>
    <name type="scientific">Streptococcus equi subsp. zooepidemicus (strain MGCS10565)</name>
    <dbReference type="NCBI Taxonomy" id="552526"/>
    <lineage>
        <taxon>Bacteria</taxon>
        <taxon>Bacillati</taxon>
        <taxon>Bacillota</taxon>
        <taxon>Bacilli</taxon>
        <taxon>Lactobacillales</taxon>
        <taxon>Streptococcaceae</taxon>
        <taxon>Streptococcus</taxon>
    </lineage>
</organism>
<sequence length="121" mass="13424">MARIAGVDIPNDKRVVISLTYVYGIGLATSKKILAAAGVSEDIRVKDLTSDQEDAIRREVDTIKVEGDLRREVNLNIKRLMEIGSYRGIRHRRGLPVRGQNTKNNARTRKGKAVAIAGKKK</sequence>
<name>RS13_STREM</name>
<dbReference type="EMBL" id="CP001129">
    <property type="protein sequence ID" value="ACG61463.1"/>
    <property type="molecule type" value="Genomic_DNA"/>
</dbReference>
<dbReference type="RefSeq" id="WP_012514749.1">
    <property type="nucleotide sequence ID" value="NC_011134.1"/>
</dbReference>
<dbReference type="SMR" id="B4U524"/>
<dbReference type="GeneID" id="83703928"/>
<dbReference type="KEGG" id="sez:Sez_0080"/>
<dbReference type="HOGENOM" id="CLU_103849_1_1_9"/>
<dbReference type="Proteomes" id="UP000001873">
    <property type="component" value="Chromosome"/>
</dbReference>
<dbReference type="GO" id="GO:0005829">
    <property type="term" value="C:cytosol"/>
    <property type="evidence" value="ECO:0007669"/>
    <property type="project" value="TreeGrafter"/>
</dbReference>
<dbReference type="GO" id="GO:0015935">
    <property type="term" value="C:small ribosomal subunit"/>
    <property type="evidence" value="ECO:0007669"/>
    <property type="project" value="TreeGrafter"/>
</dbReference>
<dbReference type="GO" id="GO:0019843">
    <property type="term" value="F:rRNA binding"/>
    <property type="evidence" value="ECO:0007669"/>
    <property type="project" value="UniProtKB-UniRule"/>
</dbReference>
<dbReference type="GO" id="GO:0003735">
    <property type="term" value="F:structural constituent of ribosome"/>
    <property type="evidence" value="ECO:0007669"/>
    <property type="project" value="InterPro"/>
</dbReference>
<dbReference type="GO" id="GO:0000049">
    <property type="term" value="F:tRNA binding"/>
    <property type="evidence" value="ECO:0007669"/>
    <property type="project" value="UniProtKB-UniRule"/>
</dbReference>
<dbReference type="GO" id="GO:0006412">
    <property type="term" value="P:translation"/>
    <property type="evidence" value="ECO:0007669"/>
    <property type="project" value="UniProtKB-UniRule"/>
</dbReference>
<dbReference type="FunFam" id="1.10.8.50:FF:000001">
    <property type="entry name" value="30S ribosomal protein S13"/>
    <property type="match status" value="1"/>
</dbReference>
<dbReference type="FunFam" id="4.10.910.10:FF:000001">
    <property type="entry name" value="30S ribosomal protein S13"/>
    <property type="match status" value="1"/>
</dbReference>
<dbReference type="Gene3D" id="1.10.8.50">
    <property type="match status" value="1"/>
</dbReference>
<dbReference type="Gene3D" id="4.10.910.10">
    <property type="entry name" value="30s ribosomal protein s13, domain 2"/>
    <property type="match status" value="1"/>
</dbReference>
<dbReference type="HAMAP" id="MF_01315">
    <property type="entry name" value="Ribosomal_uS13"/>
    <property type="match status" value="1"/>
</dbReference>
<dbReference type="InterPro" id="IPR027437">
    <property type="entry name" value="Rbsml_uS13_C"/>
</dbReference>
<dbReference type="InterPro" id="IPR001892">
    <property type="entry name" value="Ribosomal_uS13"/>
</dbReference>
<dbReference type="InterPro" id="IPR010979">
    <property type="entry name" value="Ribosomal_uS13-like_H2TH"/>
</dbReference>
<dbReference type="InterPro" id="IPR019980">
    <property type="entry name" value="Ribosomal_uS13_bac-type"/>
</dbReference>
<dbReference type="InterPro" id="IPR018269">
    <property type="entry name" value="Ribosomal_uS13_CS"/>
</dbReference>
<dbReference type="NCBIfam" id="TIGR03631">
    <property type="entry name" value="uS13_bact"/>
    <property type="match status" value="1"/>
</dbReference>
<dbReference type="PANTHER" id="PTHR10871">
    <property type="entry name" value="30S RIBOSOMAL PROTEIN S13/40S RIBOSOMAL PROTEIN S18"/>
    <property type="match status" value="1"/>
</dbReference>
<dbReference type="PANTHER" id="PTHR10871:SF1">
    <property type="entry name" value="SMALL RIBOSOMAL SUBUNIT PROTEIN US13M"/>
    <property type="match status" value="1"/>
</dbReference>
<dbReference type="Pfam" id="PF00416">
    <property type="entry name" value="Ribosomal_S13"/>
    <property type="match status" value="1"/>
</dbReference>
<dbReference type="PIRSF" id="PIRSF002134">
    <property type="entry name" value="Ribosomal_S13"/>
    <property type="match status" value="1"/>
</dbReference>
<dbReference type="SUPFAM" id="SSF46946">
    <property type="entry name" value="S13-like H2TH domain"/>
    <property type="match status" value="1"/>
</dbReference>
<dbReference type="PROSITE" id="PS00646">
    <property type="entry name" value="RIBOSOMAL_S13_1"/>
    <property type="match status" value="1"/>
</dbReference>
<dbReference type="PROSITE" id="PS50159">
    <property type="entry name" value="RIBOSOMAL_S13_2"/>
    <property type="match status" value="1"/>
</dbReference>
<keyword id="KW-0687">Ribonucleoprotein</keyword>
<keyword id="KW-0689">Ribosomal protein</keyword>
<keyword id="KW-0694">RNA-binding</keyword>
<keyword id="KW-0699">rRNA-binding</keyword>
<keyword id="KW-0820">tRNA-binding</keyword>
<protein>
    <recommendedName>
        <fullName evidence="1">Small ribosomal subunit protein uS13</fullName>
    </recommendedName>
    <alternativeName>
        <fullName evidence="3">30S ribosomal protein S13</fullName>
    </alternativeName>
</protein>
<reference key="1">
    <citation type="journal article" date="2008" name="PLoS ONE">
        <title>Genome sequence of a lancefield group C Streptococcus zooepidemicus strain causing epidemic nephritis: new information about an old disease.</title>
        <authorList>
            <person name="Beres S.B."/>
            <person name="Sesso R."/>
            <person name="Pinto S.W.L."/>
            <person name="Hoe N.P."/>
            <person name="Porcella S.F."/>
            <person name="Deleo F.R."/>
            <person name="Musser J.M."/>
        </authorList>
    </citation>
    <scope>NUCLEOTIDE SEQUENCE [LARGE SCALE GENOMIC DNA]</scope>
    <source>
        <strain>MGCS10565</strain>
    </source>
</reference>